<accession>A4YWD8</accession>
<dbReference type="EMBL" id="CU234118">
    <property type="protein sequence ID" value="CAL78214.1"/>
    <property type="molecule type" value="Genomic_DNA"/>
</dbReference>
<dbReference type="RefSeq" id="WP_011927325.1">
    <property type="nucleotide sequence ID" value="NC_009445.1"/>
</dbReference>
<dbReference type="STRING" id="114615.BRADO4474"/>
<dbReference type="KEGG" id="bra:BRADO4474"/>
<dbReference type="eggNOG" id="COG1970">
    <property type="taxonomic scope" value="Bacteria"/>
</dbReference>
<dbReference type="HOGENOM" id="CLU_095787_0_1_5"/>
<dbReference type="OrthoDB" id="9810350at2"/>
<dbReference type="Proteomes" id="UP000001994">
    <property type="component" value="Chromosome"/>
</dbReference>
<dbReference type="GO" id="GO:0005886">
    <property type="term" value="C:plasma membrane"/>
    <property type="evidence" value="ECO:0007669"/>
    <property type="project" value="UniProtKB-SubCell"/>
</dbReference>
<dbReference type="GO" id="GO:0008381">
    <property type="term" value="F:mechanosensitive monoatomic ion channel activity"/>
    <property type="evidence" value="ECO:0007669"/>
    <property type="project" value="UniProtKB-UniRule"/>
</dbReference>
<dbReference type="FunFam" id="1.10.1200.120:FF:000001">
    <property type="entry name" value="Large-conductance mechanosensitive channel"/>
    <property type="match status" value="1"/>
</dbReference>
<dbReference type="Gene3D" id="1.10.1200.120">
    <property type="entry name" value="Large-conductance mechanosensitive channel, MscL, domain 1"/>
    <property type="match status" value="1"/>
</dbReference>
<dbReference type="HAMAP" id="MF_00115">
    <property type="entry name" value="MscL"/>
    <property type="match status" value="1"/>
</dbReference>
<dbReference type="InterPro" id="IPR019823">
    <property type="entry name" value="Mechanosensitive_channel_CS"/>
</dbReference>
<dbReference type="InterPro" id="IPR001185">
    <property type="entry name" value="MS_channel"/>
</dbReference>
<dbReference type="InterPro" id="IPR037673">
    <property type="entry name" value="MSC/AndL"/>
</dbReference>
<dbReference type="InterPro" id="IPR036019">
    <property type="entry name" value="MscL_channel"/>
</dbReference>
<dbReference type="NCBIfam" id="TIGR00220">
    <property type="entry name" value="mscL"/>
    <property type="match status" value="1"/>
</dbReference>
<dbReference type="NCBIfam" id="NF001843">
    <property type="entry name" value="PRK00567.1-4"/>
    <property type="match status" value="1"/>
</dbReference>
<dbReference type="NCBIfam" id="NF010557">
    <property type="entry name" value="PRK13952.1"/>
    <property type="match status" value="1"/>
</dbReference>
<dbReference type="PANTHER" id="PTHR30266:SF2">
    <property type="entry name" value="LARGE-CONDUCTANCE MECHANOSENSITIVE CHANNEL"/>
    <property type="match status" value="1"/>
</dbReference>
<dbReference type="PANTHER" id="PTHR30266">
    <property type="entry name" value="MECHANOSENSITIVE CHANNEL MSCL"/>
    <property type="match status" value="1"/>
</dbReference>
<dbReference type="Pfam" id="PF01741">
    <property type="entry name" value="MscL"/>
    <property type="match status" value="1"/>
</dbReference>
<dbReference type="PRINTS" id="PR01264">
    <property type="entry name" value="MECHCHANNEL"/>
</dbReference>
<dbReference type="SUPFAM" id="SSF81330">
    <property type="entry name" value="Gated mechanosensitive channel"/>
    <property type="match status" value="1"/>
</dbReference>
<dbReference type="PROSITE" id="PS01327">
    <property type="entry name" value="MSCL"/>
    <property type="match status" value="1"/>
</dbReference>
<reference key="1">
    <citation type="journal article" date="2007" name="Science">
        <title>Legumes symbioses: absence of nod genes in photosynthetic bradyrhizobia.</title>
        <authorList>
            <person name="Giraud E."/>
            <person name="Moulin L."/>
            <person name="Vallenet D."/>
            <person name="Barbe V."/>
            <person name="Cytryn E."/>
            <person name="Avarre J.-C."/>
            <person name="Jaubert M."/>
            <person name="Simon D."/>
            <person name="Cartieaux F."/>
            <person name="Prin Y."/>
            <person name="Bena G."/>
            <person name="Hannibal L."/>
            <person name="Fardoux J."/>
            <person name="Kojadinovic M."/>
            <person name="Vuillet L."/>
            <person name="Lajus A."/>
            <person name="Cruveiller S."/>
            <person name="Rouy Z."/>
            <person name="Mangenot S."/>
            <person name="Segurens B."/>
            <person name="Dossat C."/>
            <person name="Franck W.L."/>
            <person name="Chang W.-S."/>
            <person name="Saunders E."/>
            <person name="Bruce D."/>
            <person name="Richardson P."/>
            <person name="Normand P."/>
            <person name="Dreyfus B."/>
            <person name="Pignol D."/>
            <person name="Stacey G."/>
            <person name="Emerich D."/>
            <person name="Vermeglio A."/>
            <person name="Medigue C."/>
            <person name="Sadowsky M."/>
        </authorList>
    </citation>
    <scope>NUCLEOTIDE SEQUENCE [LARGE SCALE GENOMIC DNA]</scope>
    <source>
        <strain>ORS 278</strain>
    </source>
</reference>
<feature type="chain" id="PRO_1000015355" description="Large-conductance mechanosensitive channel">
    <location>
        <begin position="1"/>
        <end position="138"/>
    </location>
</feature>
<feature type="transmembrane region" description="Helical" evidence="1">
    <location>
        <begin position="19"/>
        <end position="39"/>
    </location>
</feature>
<feature type="transmembrane region" description="Helical" evidence="1">
    <location>
        <begin position="40"/>
        <end position="60"/>
    </location>
</feature>
<feature type="transmembrane region" description="Helical" evidence="1">
    <location>
        <begin position="81"/>
        <end position="101"/>
    </location>
</feature>
<keyword id="KW-0997">Cell inner membrane</keyword>
<keyword id="KW-1003">Cell membrane</keyword>
<keyword id="KW-0407">Ion channel</keyword>
<keyword id="KW-0406">Ion transport</keyword>
<keyword id="KW-0472">Membrane</keyword>
<keyword id="KW-1185">Reference proteome</keyword>
<keyword id="KW-0812">Transmembrane</keyword>
<keyword id="KW-1133">Transmembrane helix</keyword>
<keyword id="KW-0813">Transport</keyword>
<gene>
    <name evidence="1" type="primary">mscL</name>
    <name type="ordered locus">BRADO4474</name>
</gene>
<proteinExistence type="inferred from homology"/>
<organism>
    <name type="scientific">Bradyrhizobium sp. (strain ORS 278)</name>
    <dbReference type="NCBI Taxonomy" id="114615"/>
    <lineage>
        <taxon>Bacteria</taxon>
        <taxon>Pseudomonadati</taxon>
        <taxon>Pseudomonadota</taxon>
        <taxon>Alphaproteobacteria</taxon>
        <taxon>Hyphomicrobiales</taxon>
        <taxon>Nitrobacteraceae</taxon>
        <taxon>Bradyrhizobium</taxon>
    </lineage>
</organism>
<comment type="function">
    <text evidence="1">Channel that opens in response to stretch forces in the membrane lipid bilayer. May participate in the regulation of osmotic pressure changes within the cell.</text>
</comment>
<comment type="subunit">
    <text evidence="1">Homopentamer.</text>
</comment>
<comment type="subcellular location">
    <subcellularLocation>
        <location evidence="1">Cell inner membrane</location>
        <topology evidence="1">Multi-pass membrane protein</topology>
    </subcellularLocation>
</comment>
<comment type="similarity">
    <text evidence="1">Belongs to the MscL family.</text>
</comment>
<evidence type="ECO:0000255" key="1">
    <source>
        <dbReference type="HAMAP-Rule" id="MF_00115"/>
    </source>
</evidence>
<sequence length="138" mass="14760">MLKEFREFAMKGNVVDLAVGVIIGGAFGAIVTSLVGDIIMPIIGAITGGLDFSNYFIPLAKSVTATNLADAKKQGAVLAYGSFLTLTLNFFIVAFVLFMVIRGMNKLKRRQEAAPAAPPKPSAEVELLTEIRDLLKKA</sequence>
<name>MSCL_BRASO</name>
<protein>
    <recommendedName>
        <fullName evidence="1">Large-conductance mechanosensitive channel</fullName>
    </recommendedName>
</protein>